<protein>
    <recommendedName>
        <fullName evidence="1">Aspartate--tRNA ligase</fullName>
        <ecNumber evidence="1">6.1.1.12</ecNumber>
    </recommendedName>
    <alternativeName>
        <fullName evidence="1">Aspartyl-tRNA synthetase</fullName>
        <shortName evidence="1">AspRS</shortName>
    </alternativeName>
</protein>
<reference key="1">
    <citation type="submission" date="2008-05" db="EMBL/GenBank/DDBJ databases">
        <title>Genome sequence of Clostridium botulinum Ba4 strain 657.</title>
        <authorList>
            <person name="Shrivastava S."/>
            <person name="Brown J.L."/>
            <person name="Bruce D."/>
            <person name="Detter C."/>
            <person name="Munk C."/>
            <person name="Smith L.A."/>
            <person name="Smith T.J."/>
            <person name="Sutton G."/>
            <person name="Brettin T.S."/>
        </authorList>
    </citation>
    <scope>NUCLEOTIDE SEQUENCE [LARGE SCALE GENOMIC DNA]</scope>
    <source>
        <strain>657 / Type Ba4</strain>
    </source>
</reference>
<accession>C3KTB6</accession>
<sequence>MGEALRGLKRTIMCGEPRENNIGEKVTVMGWVQRKRNLGGLIFVDLRDRTGIMQIVFGEEINKEAFEKSDNVKSEYCIAVTGEIVKRQSPNNDMETGAVELKGEDIKILSESETPPIYIKEGLDASENVRLKYRYLDLRRPDMQKIFMIRHKTCKVVRDFLDENGFLEMETPILTKSTPEGARDYLVPSRNYKGMFYALPQSPQIFKQLLMVSGYDKYFQITKCFRDEDLRANRQPEFTQIDMELSFVEEDDVIDLNEKLLAKVFKEVAGIDVKLPIERMPYKIAMEKYGSDKPDLRFGMEINDLTEAVKNSEFKVFKGAIEAGGSVRAIKAENCATMGRKQIDKLQDFVKTYKAKGLAWIAYKEDEIKSPIAKFLTEEEMKAILEKMDAKVGDLILIVGDKNNVVFESLGALRLHLAKELDIINKDEFRFVWITEFPLLAYNEEEGRYQAEHHPFTAIMDEDIDLLDTDPGKVRAKAYDIVLNGEELGGGSIRIHDSKLQEKMFSVLGFTKEKAWERFGFLLEAFKFGPPPHGGLAYGLDRMIMFLAGTENIKDVITFPKNQNAFCPLTEAPNVVDENQLEELGIKKIEKED</sequence>
<dbReference type="EC" id="6.1.1.12" evidence="1"/>
<dbReference type="EMBL" id="CP001083">
    <property type="protein sequence ID" value="ACQ51606.1"/>
    <property type="molecule type" value="Genomic_DNA"/>
</dbReference>
<dbReference type="RefSeq" id="WP_003360083.1">
    <property type="nucleotide sequence ID" value="NC_012658.1"/>
</dbReference>
<dbReference type="SMR" id="C3KTB6"/>
<dbReference type="KEGG" id="cbi:CLJ_B3319"/>
<dbReference type="HOGENOM" id="CLU_014330_3_2_9"/>
<dbReference type="Proteomes" id="UP000002333">
    <property type="component" value="Chromosome"/>
</dbReference>
<dbReference type="GO" id="GO:0005737">
    <property type="term" value="C:cytoplasm"/>
    <property type="evidence" value="ECO:0007669"/>
    <property type="project" value="UniProtKB-SubCell"/>
</dbReference>
<dbReference type="GO" id="GO:0004815">
    <property type="term" value="F:aspartate-tRNA ligase activity"/>
    <property type="evidence" value="ECO:0007669"/>
    <property type="project" value="UniProtKB-UniRule"/>
</dbReference>
<dbReference type="GO" id="GO:0005524">
    <property type="term" value="F:ATP binding"/>
    <property type="evidence" value="ECO:0007669"/>
    <property type="project" value="UniProtKB-UniRule"/>
</dbReference>
<dbReference type="GO" id="GO:0140096">
    <property type="term" value="F:catalytic activity, acting on a protein"/>
    <property type="evidence" value="ECO:0007669"/>
    <property type="project" value="UniProtKB-ARBA"/>
</dbReference>
<dbReference type="GO" id="GO:0003676">
    <property type="term" value="F:nucleic acid binding"/>
    <property type="evidence" value="ECO:0007669"/>
    <property type="project" value="InterPro"/>
</dbReference>
<dbReference type="GO" id="GO:0016740">
    <property type="term" value="F:transferase activity"/>
    <property type="evidence" value="ECO:0007669"/>
    <property type="project" value="UniProtKB-ARBA"/>
</dbReference>
<dbReference type="GO" id="GO:0006422">
    <property type="term" value="P:aspartyl-tRNA aminoacylation"/>
    <property type="evidence" value="ECO:0007669"/>
    <property type="project" value="UniProtKB-UniRule"/>
</dbReference>
<dbReference type="CDD" id="cd00777">
    <property type="entry name" value="AspRS_core"/>
    <property type="match status" value="1"/>
</dbReference>
<dbReference type="CDD" id="cd04317">
    <property type="entry name" value="EcAspRS_like_N"/>
    <property type="match status" value="1"/>
</dbReference>
<dbReference type="Gene3D" id="3.30.930.10">
    <property type="entry name" value="Bira Bifunctional Protein, Domain 2"/>
    <property type="match status" value="1"/>
</dbReference>
<dbReference type="Gene3D" id="3.30.1360.30">
    <property type="entry name" value="GAD-like domain"/>
    <property type="match status" value="1"/>
</dbReference>
<dbReference type="Gene3D" id="2.40.50.140">
    <property type="entry name" value="Nucleic acid-binding proteins"/>
    <property type="match status" value="1"/>
</dbReference>
<dbReference type="HAMAP" id="MF_00044">
    <property type="entry name" value="Asp_tRNA_synth_type1"/>
    <property type="match status" value="1"/>
</dbReference>
<dbReference type="InterPro" id="IPR004364">
    <property type="entry name" value="Aa-tRNA-synt_II"/>
</dbReference>
<dbReference type="InterPro" id="IPR006195">
    <property type="entry name" value="aa-tRNA-synth_II"/>
</dbReference>
<dbReference type="InterPro" id="IPR045864">
    <property type="entry name" value="aa-tRNA-synth_II/BPL/LPL"/>
</dbReference>
<dbReference type="InterPro" id="IPR004524">
    <property type="entry name" value="Asp-tRNA-ligase_1"/>
</dbReference>
<dbReference type="InterPro" id="IPR047089">
    <property type="entry name" value="Asp-tRNA-ligase_1_N"/>
</dbReference>
<dbReference type="InterPro" id="IPR002312">
    <property type="entry name" value="Asp/Asn-tRNA-synth_IIb"/>
</dbReference>
<dbReference type="InterPro" id="IPR047090">
    <property type="entry name" value="AspRS_core"/>
</dbReference>
<dbReference type="InterPro" id="IPR004115">
    <property type="entry name" value="GAD-like_sf"/>
</dbReference>
<dbReference type="InterPro" id="IPR029351">
    <property type="entry name" value="GAD_dom"/>
</dbReference>
<dbReference type="InterPro" id="IPR012340">
    <property type="entry name" value="NA-bd_OB-fold"/>
</dbReference>
<dbReference type="InterPro" id="IPR004365">
    <property type="entry name" value="NA-bd_OB_tRNA"/>
</dbReference>
<dbReference type="NCBIfam" id="TIGR00459">
    <property type="entry name" value="aspS_bact"/>
    <property type="match status" value="1"/>
</dbReference>
<dbReference type="NCBIfam" id="NF001750">
    <property type="entry name" value="PRK00476.1"/>
    <property type="match status" value="1"/>
</dbReference>
<dbReference type="PANTHER" id="PTHR22594:SF5">
    <property type="entry name" value="ASPARTATE--TRNA LIGASE, MITOCHONDRIAL"/>
    <property type="match status" value="1"/>
</dbReference>
<dbReference type="PANTHER" id="PTHR22594">
    <property type="entry name" value="ASPARTYL/LYSYL-TRNA SYNTHETASE"/>
    <property type="match status" value="1"/>
</dbReference>
<dbReference type="Pfam" id="PF02938">
    <property type="entry name" value="GAD"/>
    <property type="match status" value="1"/>
</dbReference>
<dbReference type="Pfam" id="PF00152">
    <property type="entry name" value="tRNA-synt_2"/>
    <property type="match status" value="1"/>
</dbReference>
<dbReference type="Pfam" id="PF01336">
    <property type="entry name" value="tRNA_anti-codon"/>
    <property type="match status" value="1"/>
</dbReference>
<dbReference type="PRINTS" id="PR01042">
    <property type="entry name" value="TRNASYNTHASP"/>
</dbReference>
<dbReference type="SUPFAM" id="SSF55681">
    <property type="entry name" value="Class II aaRS and biotin synthetases"/>
    <property type="match status" value="1"/>
</dbReference>
<dbReference type="SUPFAM" id="SSF55261">
    <property type="entry name" value="GAD domain-like"/>
    <property type="match status" value="1"/>
</dbReference>
<dbReference type="SUPFAM" id="SSF50249">
    <property type="entry name" value="Nucleic acid-binding proteins"/>
    <property type="match status" value="1"/>
</dbReference>
<dbReference type="PROSITE" id="PS50862">
    <property type="entry name" value="AA_TRNA_LIGASE_II"/>
    <property type="match status" value="1"/>
</dbReference>
<feature type="chain" id="PRO_1000202151" description="Aspartate--tRNA ligase">
    <location>
        <begin position="1"/>
        <end position="593"/>
    </location>
</feature>
<feature type="region of interest" description="Aspartate" evidence="1">
    <location>
        <begin position="204"/>
        <end position="207"/>
    </location>
</feature>
<feature type="binding site" evidence="1">
    <location>
        <position position="180"/>
    </location>
    <ligand>
        <name>L-aspartate</name>
        <dbReference type="ChEBI" id="CHEBI:29991"/>
    </ligand>
</feature>
<feature type="binding site" evidence="1">
    <location>
        <begin position="226"/>
        <end position="228"/>
    </location>
    <ligand>
        <name>ATP</name>
        <dbReference type="ChEBI" id="CHEBI:30616"/>
    </ligand>
</feature>
<feature type="binding site" evidence="1">
    <location>
        <position position="226"/>
    </location>
    <ligand>
        <name>L-aspartate</name>
        <dbReference type="ChEBI" id="CHEBI:29991"/>
    </ligand>
</feature>
<feature type="binding site" evidence="1">
    <location>
        <position position="235"/>
    </location>
    <ligand>
        <name>ATP</name>
        <dbReference type="ChEBI" id="CHEBI:30616"/>
    </ligand>
</feature>
<feature type="binding site" evidence="1">
    <location>
        <position position="453"/>
    </location>
    <ligand>
        <name>L-aspartate</name>
        <dbReference type="ChEBI" id="CHEBI:29991"/>
    </ligand>
</feature>
<feature type="binding site" evidence="1">
    <location>
        <position position="487"/>
    </location>
    <ligand>
        <name>ATP</name>
        <dbReference type="ChEBI" id="CHEBI:30616"/>
    </ligand>
</feature>
<feature type="binding site" evidence="1">
    <location>
        <position position="494"/>
    </location>
    <ligand>
        <name>L-aspartate</name>
        <dbReference type="ChEBI" id="CHEBI:29991"/>
    </ligand>
</feature>
<feature type="binding site" evidence="1">
    <location>
        <begin position="539"/>
        <end position="542"/>
    </location>
    <ligand>
        <name>ATP</name>
        <dbReference type="ChEBI" id="CHEBI:30616"/>
    </ligand>
</feature>
<comment type="function">
    <text evidence="1">Catalyzes the attachment of L-aspartate to tRNA(Asp) in a two-step reaction: L-aspartate is first activated by ATP to form Asp-AMP and then transferred to the acceptor end of tRNA(Asp).</text>
</comment>
<comment type="catalytic activity">
    <reaction evidence="1">
        <text>tRNA(Asp) + L-aspartate + ATP = L-aspartyl-tRNA(Asp) + AMP + diphosphate</text>
        <dbReference type="Rhea" id="RHEA:19649"/>
        <dbReference type="Rhea" id="RHEA-COMP:9660"/>
        <dbReference type="Rhea" id="RHEA-COMP:9678"/>
        <dbReference type="ChEBI" id="CHEBI:29991"/>
        <dbReference type="ChEBI" id="CHEBI:30616"/>
        <dbReference type="ChEBI" id="CHEBI:33019"/>
        <dbReference type="ChEBI" id="CHEBI:78442"/>
        <dbReference type="ChEBI" id="CHEBI:78516"/>
        <dbReference type="ChEBI" id="CHEBI:456215"/>
        <dbReference type="EC" id="6.1.1.12"/>
    </reaction>
</comment>
<comment type="subunit">
    <text evidence="1">Homodimer.</text>
</comment>
<comment type="subcellular location">
    <subcellularLocation>
        <location evidence="1">Cytoplasm</location>
    </subcellularLocation>
</comment>
<comment type="similarity">
    <text evidence="1">Belongs to the class-II aminoacyl-tRNA synthetase family. Type 1 subfamily.</text>
</comment>
<proteinExistence type="inferred from homology"/>
<keyword id="KW-0030">Aminoacyl-tRNA synthetase</keyword>
<keyword id="KW-0067">ATP-binding</keyword>
<keyword id="KW-0963">Cytoplasm</keyword>
<keyword id="KW-0436">Ligase</keyword>
<keyword id="KW-0547">Nucleotide-binding</keyword>
<keyword id="KW-0648">Protein biosynthesis</keyword>
<name>SYD_CLOB6</name>
<gene>
    <name evidence="1" type="primary">aspS</name>
    <name type="ordered locus">CLJ_B3319</name>
</gene>
<evidence type="ECO:0000255" key="1">
    <source>
        <dbReference type="HAMAP-Rule" id="MF_00044"/>
    </source>
</evidence>
<organism>
    <name type="scientific">Clostridium botulinum (strain 657 / Type Ba4)</name>
    <dbReference type="NCBI Taxonomy" id="515621"/>
    <lineage>
        <taxon>Bacteria</taxon>
        <taxon>Bacillati</taxon>
        <taxon>Bacillota</taxon>
        <taxon>Clostridia</taxon>
        <taxon>Eubacteriales</taxon>
        <taxon>Clostridiaceae</taxon>
        <taxon>Clostridium</taxon>
    </lineage>
</organism>